<protein>
    <recommendedName>
        <fullName>Muscarinic acetylcholine receptor M5</fullName>
    </recommendedName>
</protein>
<name>ACM5_MOUSE</name>
<reference key="1">
    <citation type="submission" date="2000-09" db="EMBL/GenBank/DDBJ databases">
        <title>Isolation, sequence and functional expression of the mouse M1-M5 muscarinic acetylcholine receptor genes.</title>
        <authorList>
            <person name="Yamada M."/>
            <person name="Wess J."/>
        </authorList>
    </citation>
    <scope>NUCLEOTIDE SEQUENCE [GENOMIC DNA]</scope>
</reference>
<reference key="2">
    <citation type="journal article" date="2009" name="PLoS Biol.">
        <title>Lineage-specific biology revealed by a finished genome assembly of the mouse.</title>
        <authorList>
            <person name="Church D.M."/>
            <person name="Goodstadt L."/>
            <person name="Hillier L.W."/>
            <person name="Zody M.C."/>
            <person name="Goldstein S."/>
            <person name="She X."/>
            <person name="Bult C.J."/>
            <person name="Agarwala R."/>
            <person name="Cherry J.L."/>
            <person name="DiCuccio M."/>
            <person name="Hlavina W."/>
            <person name="Kapustin Y."/>
            <person name="Meric P."/>
            <person name="Maglott D."/>
            <person name="Birtle Z."/>
            <person name="Marques A.C."/>
            <person name="Graves T."/>
            <person name="Zhou S."/>
            <person name="Teague B."/>
            <person name="Potamousis K."/>
            <person name="Churas C."/>
            <person name="Place M."/>
            <person name="Herschleb J."/>
            <person name="Runnheim R."/>
            <person name="Forrest D."/>
            <person name="Amos-Landgraf J."/>
            <person name="Schwartz D.C."/>
            <person name="Cheng Z."/>
            <person name="Lindblad-Toh K."/>
            <person name="Eichler E.E."/>
            <person name="Ponting C.P."/>
        </authorList>
    </citation>
    <scope>NUCLEOTIDE SEQUENCE [LARGE SCALE GENOMIC DNA]</scope>
    <source>
        <strain>C57BL/6J</strain>
    </source>
</reference>
<reference key="3">
    <citation type="journal article" date="2004" name="Genome Res.">
        <title>The status, quality, and expansion of the NIH full-length cDNA project: the Mammalian Gene Collection (MGC).</title>
        <authorList>
            <consortium name="The MGC Project Team"/>
        </authorList>
    </citation>
    <scope>NUCLEOTIDE SEQUENCE [LARGE SCALE MRNA]</scope>
    <source>
        <tissue>Brain</tissue>
    </source>
</reference>
<comment type="function">
    <text evidence="1">The muscarinic acetylcholine receptor mediates various cellular responses, including inhibition of adenylate cyclase, breakdown of phosphoinositides and modulation of potassium channels through the action of G proteins. Primary transducing effect is Pi turnover (By similarity).</text>
</comment>
<comment type="subcellular location">
    <subcellularLocation>
        <location>Cell membrane</location>
        <topology>Multi-pass membrane protein</topology>
    </subcellularLocation>
    <subcellularLocation>
        <location>Postsynaptic cell membrane</location>
        <topology>Multi-pass membrane protein</topology>
    </subcellularLocation>
</comment>
<comment type="similarity">
    <text evidence="3">Belongs to the G-protein coupled receptor 1 family. Muscarinic acetylcholine receptor subfamily. CHRM5 sub-subfamily.</text>
</comment>
<dbReference type="EMBL" id="AF264051">
    <property type="protein sequence ID" value="AAL26028.1"/>
    <property type="molecule type" value="Genomic_DNA"/>
</dbReference>
<dbReference type="EMBL" id="BC120615">
    <property type="protein sequence ID" value="AAI20616.1"/>
    <property type="molecule type" value="mRNA"/>
</dbReference>
<dbReference type="EMBL" id="AL731840">
    <property type="status" value="NOT_ANNOTATED_CDS"/>
    <property type="molecule type" value="Genomic_DNA"/>
</dbReference>
<dbReference type="CCDS" id="CCDS16556.1"/>
<dbReference type="RefSeq" id="NP_991352.2">
    <property type="nucleotide sequence ID" value="NM_205783.3"/>
</dbReference>
<dbReference type="RefSeq" id="XP_006499162.1">
    <property type="nucleotide sequence ID" value="XM_006499099.3"/>
</dbReference>
<dbReference type="SMR" id="Q920H4"/>
<dbReference type="FunCoup" id="Q920H4">
    <property type="interactions" value="709"/>
</dbReference>
<dbReference type="IntAct" id="Q920H4">
    <property type="interactions" value="1"/>
</dbReference>
<dbReference type="STRING" id="10090.ENSMUSP00000097185"/>
<dbReference type="BindingDB" id="Q920H4"/>
<dbReference type="ChEMBL" id="CHEMBL2097162"/>
<dbReference type="DrugCentral" id="Q920H4"/>
<dbReference type="GlyCosmos" id="Q920H4">
    <property type="glycosylation" value="1 site, No reported glycans"/>
</dbReference>
<dbReference type="GlyGen" id="Q920H4">
    <property type="glycosylation" value="1 site"/>
</dbReference>
<dbReference type="iPTMnet" id="Q920H4"/>
<dbReference type="PhosphoSitePlus" id="Q920H4"/>
<dbReference type="PaxDb" id="10090-ENSMUSP00000097185"/>
<dbReference type="ProteomicsDB" id="285587"/>
<dbReference type="Antibodypedia" id="2963">
    <property type="antibodies" value="246 antibodies from 29 providers"/>
</dbReference>
<dbReference type="DNASU" id="213788"/>
<dbReference type="Ensembl" id="ENSMUST00000099589.4">
    <property type="protein sequence ID" value="ENSMUSP00000097185.3"/>
    <property type="gene ID" value="ENSMUSG00000074939.4"/>
</dbReference>
<dbReference type="GeneID" id="213788"/>
<dbReference type="KEGG" id="mmu:213788"/>
<dbReference type="UCSC" id="uc008lpd.2">
    <property type="organism name" value="mouse"/>
</dbReference>
<dbReference type="AGR" id="MGI:109248"/>
<dbReference type="CTD" id="1133"/>
<dbReference type="MGI" id="MGI:109248">
    <property type="gene designation" value="Chrm5"/>
</dbReference>
<dbReference type="VEuPathDB" id="HostDB:ENSMUSG00000074939"/>
<dbReference type="eggNOG" id="KOG4220">
    <property type="taxonomic scope" value="Eukaryota"/>
</dbReference>
<dbReference type="GeneTree" id="ENSGT00940000158450"/>
<dbReference type="HOGENOM" id="CLU_009579_11_2_1"/>
<dbReference type="InParanoid" id="Q920H4"/>
<dbReference type="OMA" id="IPVTLWH"/>
<dbReference type="OrthoDB" id="10071887at2759"/>
<dbReference type="PhylomeDB" id="Q920H4"/>
<dbReference type="TreeFam" id="TF320495"/>
<dbReference type="Reactome" id="R-MMU-390648">
    <property type="pathway name" value="Muscarinic acetylcholine receptors"/>
</dbReference>
<dbReference type="Reactome" id="R-MMU-416476">
    <property type="pathway name" value="G alpha (q) signalling events"/>
</dbReference>
<dbReference type="BioGRID-ORCS" id="213788">
    <property type="hits" value="2 hits in 78 CRISPR screens"/>
</dbReference>
<dbReference type="ChiTaRS" id="Chrm5">
    <property type="organism name" value="mouse"/>
</dbReference>
<dbReference type="PRO" id="PR:Q920H4"/>
<dbReference type="Proteomes" id="UP000000589">
    <property type="component" value="Chromosome 2"/>
</dbReference>
<dbReference type="RNAct" id="Q920H4">
    <property type="molecule type" value="protein"/>
</dbReference>
<dbReference type="Bgee" id="ENSMUSG00000074939">
    <property type="expression patterns" value="Expressed in ventromedial nucleus of hypothalamus and 41 other cell types or tissues"/>
</dbReference>
<dbReference type="GO" id="GO:0045211">
    <property type="term" value="C:postsynaptic membrane"/>
    <property type="evidence" value="ECO:0007669"/>
    <property type="project" value="UniProtKB-SubCell"/>
</dbReference>
<dbReference type="GO" id="GO:0016934">
    <property type="term" value="F:extracellularly glycine-gated chloride channel activity"/>
    <property type="evidence" value="ECO:0000304"/>
    <property type="project" value="MGI"/>
</dbReference>
<dbReference type="GO" id="GO:0016907">
    <property type="term" value="F:G protein-coupled acetylcholine receptor activity"/>
    <property type="evidence" value="ECO:0007669"/>
    <property type="project" value="Ensembl"/>
</dbReference>
<dbReference type="GO" id="GO:0015872">
    <property type="term" value="P:dopamine transport"/>
    <property type="evidence" value="ECO:0000314"/>
    <property type="project" value="MGI"/>
</dbReference>
<dbReference type="GO" id="GO:0001696">
    <property type="term" value="P:gastric acid secretion"/>
    <property type="evidence" value="ECO:0007669"/>
    <property type="project" value="InterPro"/>
</dbReference>
<dbReference type="GO" id="GO:0060304">
    <property type="term" value="P:regulation of phosphatidylinositol dephosphorylation"/>
    <property type="evidence" value="ECO:0007669"/>
    <property type="project" value="Ensembl"/>
</dbReference>
<dbReference type="GO" id="GO:0019226">
    <property type="term" value="P:transmission of nerve impulse"/>
    <property type="evidence" value="ECO:0000314"/>
    <property type="project" value="MGI"/>
</dbReference>
<dbReference type="CDD" id="cd15300">
    <property type="entry name" value="7tmA_mAChR_M5"/>
    <property type="match status" value="1"/>
</dbReference>
<dbReference type="FunFam" id="1.20.1070.10:FF:000047">
    <property type="entry name" value="Muscarinic acetylcholine receptor"/>
    <property type="match status" value="1"/>
</dbReference>
<dbReference type="FunFam" id="1.20.1070.10:FF:000164">
    <property type="entry name" value="Muscarinic acetylcholine receptor"/>
    <property type="match status" value="1"/>
</dbReference>
<dbReference type="Gene3D" id="1.20.1070.10">
    <property type="entry name" value="Rhodopsin 7-helix transmembrane proteins"/>
    <property type="match status" value="2"/>
</dbReference>
<dbReference type="InterPro" id="IPR000276">
    <property type="entry name" value="GPCR_Rhodpsn"/>
</dbReference>
<dbReference type="InterPro" id="IPR017452">
    <property type="entry name" value="GPCR_Rhodpsn_7TM"/>
</dbReference>
<dbReference type="InterPro" id="IPR000502">
    <property type="entry name" value="Musac_Ach_M5_rcpt"/>
</dbReference>
<dbReference type="InterPro" id="IPR000995">
    <property type="entry name" value="Musac_Ach_rcpt"/>
</dbReference>
<dbReference type="PANTHER" id="PTHR24247">
    <property type="entry name" value="5-HYDROXYTRYPTAMINE RECEPTOR"/>
    <property type="match status" value="1"/>
</dbReference>
<dbReference type="PANTHER" id="PTHR24247:SF209">
    <property type="entry name" value="MUSCARINIC ACETYLCHOLINE RECEPTOR M5"/>
    <property type="match status" value="1"/>
</dbReference>
<dbReference type="Pfam" id="PF00001">
    <property type="entry name" value="7tm_1"/>
    <property type="match status" value="1"/>
</dbReference>
<dbReference type="PRINTS" id="PR00237">
    <property type="entry name" value="GPCRRHODOPSN"/>
</dbReference>
<dbReference type="PRINTS" id="PR00243">
    <property type="entry name" value="MUSCARINICR"/>
</dbReference>
<dbReference type="PRINTS" id="PR00542">
    <property type="entry name" value="MUSCRINICM5R"/>
</dbReference>
<dbReference type="SUPFAM" id="SSF81321">
    <property type="entry name" value="Family A G protein-coupled receptor-like"/>
    <property type="match status" value="1"/>
</dbReference>
<dbReference type="PROSITE" id="PS00237">
    <property type="entry name" value="G_PROTEIN_RECEP_F1_1"/>
    <property type="match status" value="1"/>
</dbReference>
<dbReference type="PROSITE" id="PS50262">
    <property type="entry name" value="G_PROTEIN_RECEP_F1_2"/>
    <property type="match status" value="1"/>
</dbReference>
<accession>Q920H4</accession>
<accession>A2AHU3</accession>
<accession>Q0VBI9</accession>
<gene>
    <name type="primary">Chrm5</name>
</gene>
<keyword id="KW-1003">Cell membrane</keyword>
<keyword id="KW-1015">Disulfide bond</keyword>
<keyword id="KW-0297">G-protein coupled receptor</keyword>
<keyword id="KW-0325">Glycoprotein</keyword>
<keyword id="KW-0472">Membrane</keyword>
<keyword id="KW-0597">Phosphoprotein</keyword>
<keyword id="KW-0628">Postsynaptic cell membrane</keyword>
<keyword id="KW-0675">Receptor</keyword>
<keyword id="KW-1185">Reference proteome</keyword>
<keyword id="KW-0770">Synapse</keyword>
<keyword id="KW-0807">Transducer</keyword>
<keyword id="KW-0812">Transmembrane</keyword>
<keyword id="KW-1133">Transmembrane helix</keyword>
<evidence type="ECO:0000250" key="1"/>
<evidence type="ECO:0000255" key="2"/>
<evidence type="ECO:0000255" key="3">
    <source>
        <dbReference type="PROSITE-ProRule" id="PRU00521"/>
    </source>
</evidence>
<evidence type="ECO:0000256" key="4">
    <source>
        <dbReference type="SAM" id="MobiDB-lite"/>
    </source>
</evidence>
<evidence type="ECO:0000305" key="5"/>
<organism>
    <name type="scientific">Mus musculus</name>
    <name type="common">Mouse</name>
    <dbReference type="NCBI Taxonomy" id="10090"/>
    <lineage>
        <taxon>Eukaryota</taxon>
        <taxon>Metazoa</taxon>
        <taxon>Chordata</taxon>
        <taxon>Craniata</taxon>
        <taxon>Vertebrata</taxon>
        <taxon>Euteleostomi</taxon>
        <taxon>Mammalia</taxon>
        <taxon>Eutheria</taxon>
        <taxon>Euarchontoglires</taxon>
        <taxon>Glires</taxon>
        <taxon>Rodentia</taxon>
        <taxon>Myomorpha</taxon>
        <taxon>Muroidea</taxon>
        <taxon>Muridae</taxon>
        <taxon>Murinae</taxon>
        <taxon>Mus</taxon>
        <taxon>Mus</taxon>
    </lineage>
</organism>
<proteinExistence type="evidence at transcript level"/>
<feature type="chain" id="PRO_0000069044" description="Muscarinic acetylcholine receptor M5">
    <location>
        <begin position="1"/>
        <end position="532"/>
    </location>
</feature>
<feature type="topological domain" description="Extracellular" evidence="1">
    <location>
        <begin position="1"/>
        <end position="29"/>
    </location>
</feature>
<feature type="transmembrane region" description="Helical; Name=1" evidence="1">
    <location>
        <begin position="30"/>
        <end position="53"/>
    </location>
</feature>
<feature type="topological domain" description="Cytoplasmic" evidence="1">
    <location>
        <begin position="54"/>
        <end position="66"/>
    </location>
</feature>
<feature type="transmembrane region" description="Helical; Name=2" evidence="1">
    <location>
        <begin position="67"/>
        <end position="87"/>
    </location>
</feature>
<feature type="topological domain" description="Extracellular" evidence="1">
    <location>
        <begin position="88"/>
        <end position="104"/>
    </location>
</feature>
<feature type="transmembrane region" description="Helical; Name=3" evidence="1">
    <location>
        <begin position="105"/>
        <end position="126"/>
    </location>
</feature>
<feature type="topological domain" description="Cytoplasmic" evidence="1">
    <location>
        <begin position="127"/>
        <end position="146"/>
    </location>
</feature>
<feature type="transmembrane region" description="Helical; Name=4" evidence="1">
    <location>
        <begin position="147"/>
        <end position="169"/>
    </location>
</feature>
<feature type="topological domain" description="Extracellular" evidence="1">
    <location>
        <begin position="170"/>
        <end position="191"/>
    </location>
</feature>
<feature type="transmembrane region" description="Helical; Name=5" evidence="1">
    <location>
        <begin position="192"/>
        <end position="214"/>
    </location>
</feature>
<feature type="topological domain" description="Cytoplasmic" evidence="1">
    <location>
        <begin position="215"/>
        <end position="443"/>
    </location>
</feature>
<feature type="transmembrane region" description="Helical; Name=6" evidence="1">
    <location>
        <begin position="444"/>
        <end position="464"/>
    </location>
</feature>
<feature type="topological domain" description="Extracellular" evidence="1">
    <location>
        <begin position="465"/>
        <end position="478"/>
    </location>
</feature>
<feature type="transmembrane region" description="Helical; Name=7" evidence="1">
    <location>
        <begin position="479"/>
        <end position="498"/>
    </location>
</feature>
<feature type="topological domain" description="Cytoplasmic" evidence="1">
    <location>
        <begin position="499"/>
        <end position="532"/>
    </location>
</feature>
<feature type="region of interest" description="Disordered" evidence="4">
    <location>
        <begin position="265"/>
        <end position="290"/>
    </location>
</feature>
<feature type="compositionally biased region" description="Low complexity" evidence="4">
    <location>
        <begin position="270"/>
        <end position="281"/>
    </location>
</feature>
<feature type="modified residue" description="Phosphothreonine" evidence="2">
    <location>
        <position position="501"/>
    </location>
</feature>
<feature type="modified residue" description="Phosphothreonine" evidence="2">
    <location>
        <position position="505"/>
    </location>
</feature>
<feature type="glycosylation site" description="N-linked (GlcNAc...) asparagine" evidence="2">
    <location>
        <position position="8"/>
    </location>
</feature>
<feature type="disulfide bond" evidence="3">
    <location>
        <begin position="103"/>
        <end position="183"/>
    </location>
</feature>
<feature type="sequence conflict" description="In Ref. 1; AAL26028 and 3; AAI20616." evidence="5" ref="1 3">
    <original>V</original>
    <variation>E</variation>
    <location>
        <position position="265"/>
    </location>
</feature>
<feature type="sequence conflict" description="In Ref. 1; AAL26028 and 3; AAI20616." evidence="5" ref="1 3">
    <original>C</original>
    <variation>Y</variation>
    <location>
        <position position="325"/>
    </location>
</feature>
<sequence>MEGESYHNETTVNGTPVNHQALERHGLWEVITIAAVTAVVSLMTIVGNVLVMISFKVNSQLKTVNNYYLLSLACADLIIGIFSMNLYTTYILMGRWVLGSLACDLWLALDYVASNASVMNLLVISFDRYFSITRPLTYRAKRTPKRAGIMIGLAWLVSFILWAPAILCWQYLVGKRTVPPDECQIQFLSEPTITFGTAIAAFYIPVSVMTILYCRIYRETEKRTKDLADLQGSDSVAEVKKRKPAHRTLLRSFFSCPRPSLAQRVRNQASWSSSRRSTSTTGKPTQATDLSADWEKAEQVTNCSSCPSSEDEAKATTDPVFQVVCKNEAKESPGKEFNTQETKETFVSPRTENNDYDTPKYFLSPGAAHRLKSQKCVAYKFRLVVKADGTQETNNGCRKVKIMPCSFPVSKDPSTKGLDPHLSHQMTKRKRMVLVKERKAAQTLSAILLAFIITWTPYNIMVLVSTFCDKCVPVTLWHLGYWLCYVNSTINPICYALCNRTFRKTFKLLLLCRWKKKKVEEKLYWQGNSKLP</sequence>